<sequence>MADQSSEIVNALSSEMEAVSVSSTQASSSSDGFQMSEEVEKRYKIVRSIGEECIQEEELKNLLAKKAAPICYDGFEPSGRMHIAQGVMKVINVNKMTSAGCRVKIWIADWFAQLNNKMGGDLKKIRVVGEYFQEIWKAAGMDNDKVEFLWSSEEINSKADKYWPLVMDIARKNKLPRILRCVQIMGRSETDELSAAQILYPCMQCADIFFLEADICQLGMDQRKVNVLAREYCDDIKRKNKPIILSHHMLPGLQQGQEKMSKSDPLSAIFMEDEEAEVNVKIKKAYCPPKVVKGNPCLEYIKYIILPWFDEFTVERNEEYGGNKTYKSFEDIAADYESGELHPGDLKKGLMNALNKILQPVRDHFKTDARAKNLLKQIKAYRVTR</sequence>
<accession>Q8S9J2</accession>
<accession>P93018</accession>
<accession>Q0WSB1</accession>
<evidence type="ECO:0000250" key="1"/>
<evidence type="ECO:0000250" key="2">
    <source>
        <dbReference type="UniProtKB" id="P54577"/>
    </source>
</evidence>
<evidence type="ECO:0000250" key="3">
    <source>
        <dbReference type="UniProtKB" id="Q9Y2Z4"/>
    </source>
</evidence>
<evidence type="ECO:0000269" key="4">
    <source>
    </source>
</evidence>
<evidence type="ECO:0000305" key="5"/>
<evidence type="ECO:0000305" key="6">
    <source>
    </source>
</evidence>
<evidence type="ECO:0000305" key="7">
    <source>
    </source>
</evidence>
<evidence type="ECO:0000312" key="8">
    <source>
        <dbReference type="Araport" id="AT2G33840"/>
    </source>
</evidence>
<evidence type="ECO:0000312" key="9">
    <source>
        <dbReference type="EMBL" id="AAC69137.2"/>
    </source>
</evidence>
<gene>
    <name evidence="8" type="ordered locus">At2g33840</name>
    <name evidence="9" type="ORF">T1B8.14</name>
</gene>
<feature type="chain" id="PRO_0000433553" description="Tyrosine--tRNA ligase 1, cytoplasmic">
    <location>
        <begin position="1"/>
        <end position="385"/>
    </location>
</feature>
<feature type="short sequence motif" description="'HIGH' region" evidence="5">
    <location>
        <begin position="77"/>
        <end position="85"/>
    </location>
</feature>
<feature type="short sequence motif" description="'KMSKS' region" evidence="5">
    <location>
        <begin position="259"/>
        <end position="263"/>
    </location>
</feature>
<feature type="binding site" evidence="2">
    <location>
        <position position="200"/>
    </location>
    <ligand>
        <name>L-tyrosine</name>
        <dbReference type="ChEBI" id="CHEBI:58315"/>
    </ligand>
</feature>
<feature type="binding site" evidence="2">
    <location>
        <position position="204"/>
    </location>
    <ligand>
        <name>L-tyrosine</name>
        <dbReference type="ChEBI" id="CHEBI:58315"/>
    </ligand>
</feature>
<feature type="binding site" evidence="2">
    <location>
        <position position="207"/>
    </location>
    <ligand>
        <name>L-tyrosine</name>
        <dbReference type="ChEBI" id="CHEBI:58315"/>
    </ligand>
</feature>
<feature type="binding site" evidence="2">
    <location>
        <position position="222"/>
    </location>
    <ligand>
        <name>L-tyrosine</name>
        <dbReference type="ChEBI" id="CHEBI:58315"/>
    </ligand>
</feature>
<feature type="binding site" evidence="1">
    <location>
        <position position="262"/>
    </location>
    <ligand>
        <name>ATP</name>
        <dbReference type="ChEBI" id="CHEBI:30616"/>
    </ligand>
</feature>
<feature type="sequence conflict" description="In Ref. 4; BAE99987." evidence="5" ref="4">
    <original>K</original>
    <variation>R</variation>
    <location>
        <position position="224"/>
    </location>
</feature>
<proteinExistence type="evidence at transcript level"/>
<organism>
    <name type="scientific">Arabidopsis thaliana</name>
    <name type="common">Mouse-ear cress</name>
    <dbReference type="NCBI Taxonomy" id="3702"/>
    <lineage>
        <taxon>Eukaryota</taxon>
        <taxon>Viridiplantae</taxon>
        <taxon>Streptophyta</taxon>
        <taxon>Embryophyta</taxon>
        <taxon>Tracheophyta</taxon>
        <taxon>Spermatophyta</taxon>
        <taxon>Magnoliopsida</taxon>
        <taxon>eudicotyledons</taxon>
        <taxon>Gunneridae</taxon>
        <taxon>Pentapetalae</taxon>
        <taxon>rosids</taxon>
        <taxon>malvids</taxon>
        <taxon>Brassicales</taxon>
        <taxon>Brassicaceae</taxon>
        <taxon>Camelineae</taxon>
        <taxon>Arabidopsis</taxon>
    </lineage>
</organism>
<keyword id="KW-0030">Aminoacyl-tRNA synthetase</keyword>
<keyword id="KW-0067">ATP-binding</keyword>
<keyword id="KW-0963">Cytoplasm</keyword>
<keyword id="KW-0436">Ligase</keyword>
<keyword id="KW-0547">Nucleotide-binding</keyword>
<keyword id="KW-0648">Protein biosynthesis</keyword>
<keyword id="KW-1185">Reference proteome</keyword>
<dbReference type="EC" id="6.1.1.1" evidence="5"/>
<dbReference type="EMBL" id="U78721">
    <property type="protein sequence ID" value="AAC69137.2"/>
    <property type="status" value="ALT_SEQ"/>
    <property type="molecule type" value="Genomic_DNA"/>
</dbReference>
<dbReference type="EMBL" id="CP002685">
    <property type="protein sequence ID" value="AEC08894.1"/>
    <property type="molecule type" value="Genomic_DNA"/>
</dbReference>
<dbReference type="EMBL" id="AY075664">
    <property type="protein sequence ID" value="AAL77671.1"/>
    <property type="molecule type" value="mRNA"/>
</dbReference>
<dbReference type="EMBL" id="AY120698">
    <property type="protein sequence ID" value="AAM52241.1"/>
    <property type="molecule type" value="mRNA"/>
</dbReference>
<dbReference type="EMBL" id="AK228026">
    <property type="protein sequence ID" value="BAE99987.1"/>
    <property type="status" value="ALT_FRAME"/>
    <property type="molecule type" value="mRNA"/>
</dbReference>
<dbReference type="PIR" id="C84750">
    <property type="entry name" value="C84750"/>
</dbReference>
<dbReference type="RefSeq" id="NP_850222.1">
    <property type="nucleotide sequence ID" value="NM_179891.4"/>
</dbReference>
<dbReference type="SMR" id="Q8S9J2"/>
<dbReference type="FunCoup" id="Q8S9J2">
    <property type="interactions" value="4103"/>
</dbReference>
<dbReference type="STRING" id="3702.Q8S9J2"/>
<dbReference type="PaxDb" id="3702-AT2G33840.1"/>
<dbReference type="ProteomicsDB" id="245300"/>
<dbReference type="EnsemblPlants" id="AT2G33840.1">
    <property type="protein sequence ID" value="AT2G33840.1"/>
    <property type="gene ID" value="AT2G33840"/>
</dbReference>
<dbReference type="GeneID" id="817952"/>
<dbReference type="Gramene" id="AT2G33840.1">
    <property type="protein sequence ID" value="AT2G33840.1"/>
    <property type="gene ID" value="AT2G33840"/>
</dbReference>
<dbReference type="KEGG" id="ath:AT2G33840"/>
<dbReference type="Araport" id="AT2G33840"/>
<dbReference type="TAIR" id="AT2G33840"/>
<dbReference type="eggNOG" id="KOG2144">
    <property type="taxonomic scope" value="Eukaryota"/>
</dbReference>
<dbReference type="HOGENOM" id="CLU_035267_1_1_1"/>
<dbReference type="InParanoid" id="Q8S9J2"/>
<dbReference type="OMA" id="RKIHMLA"/>
<dbReference type="OrthoDB" id="197206at2759"/>
<dbReference type="PhylomeDB" id="Q8S9J2"/>
<dbReference type="PRO" id="PR:Q8S9J2"/>
<dbReference type="Proteomes" id="UP000006548">
    <property type="component" value="Chromosome 2"/>
</dbReference>
<dbReference type="ExpressionAtlas" id="Q8S9J2">
    <property type="expression patterns" value="baseline and differential"/>
</dbReference>
<dbReference type="GO" id="GO:0005829">
    <property type="term" value="C:cytosol"/>
    <property type="evidence" value="ECO:0007669"/>
    <property type="project" value="UniProtKB-SubCell"/>
</dbReference>
<dbReference type="GO" id="GO:0005524">
    <property type="term" value="F:ATP binding"/>
    <property type="evidence" value="ECO:0007669"/>
    <property type="project" value="UniProtKB-KW"/>
</dbReference>
<dbReference type="GO" id="GO:0004831">
    <property type="term" value="F:tyrosine-tRNA ligase activity"/>
    <property type="evidence" value="ECO:0007669"/>
    <property type="project" value="UniProtKB-EC"/>
</dbReference>
<dbReference type="GO" id="GO:0006418">
    <property type="term" value="P:tRNA aminoacylation for protein translation"/>
    <property type="evidence" value="ECO:0007669"/>
    <property type="project" value="InterPro"/>
</dbReference>
<dbReference type="FunFam" id="3.40.50.620:FF:000085">
    <property type="entry name" value="Tyrosine--tRNA ligase 1 cytoplasmic"/>
    <property type="match status" value="1"/>
</dbReference>
<dbReference type="FunFam" id="3.40.50.620:FF:000103">
    <property type="entry name" value="tyrosine--tRNA ligase 1, cytoplasmic"/>
    <property type="match status" value="1"/>
</dbReference>
<dbReference type="Gene3D" id="3.40.50.620">
    <property type="entry name" value="HUPs"/>
    <property type="match status" value="2"/>
</dbReference>
<dbReference type="InterPro" id="IPR002305">
    <property type="entry name" value="aa-tRNA-synth_Ic"/>
</dbReference>
<dbReference type="InterPro" id="IPR014729">
    <property type="entry name" value="Rossmann-like_a/b/a_fold"/>
</dbReference>
<dbReference type="InterPro" id="IPR023617">
    <property type="entry name" value="Tyr-tRNA-ligase_arc/euk-type"/>
</dbReference>
<dbReference type="InterPro" id="IPR050489">
    <property type="entry name" value="Tyr-tRNA_synthase"/>
</dbReference>
<dbReference type="NCBIfam" id="NF006330">
    <property type="entry name" value="PRK08560.1"/>
    <property type="match status" value="1"/>
</dbReference>
<dbReference type="PANTHER" id="PTHR46264:SF4">
    <property type="entry name" value="TYROSINE--TRNA LIGASE, CYTOPLASMIC"/>
    <property type="match status" value="1"/>
</dbReference>
<dbReference type="PANTHER" id="PTHR46264">
    <property type="entry name" value="TYROSINE-TRNA LIGASE"/>
    <property type="match status" value="1"/>
</dbReference>
<dbReference type="Pfam" id="PF00579">
    <property type="entry name" value="tRNA-synt_1b"/>
    <property type="match status" value="1"/>
</dbReference>
<dbReference type="PIRSF" id="PIRSF006588">
    <property type="entry name" value="TyrRS_arch_euk"/>
    <property type="match status" value="1"/>
</dbReference>
<dbReference type="SUPFAM" id="SSF52374">
    <property type="entry name" value="Nucleotidylyl transferase"/>
    <property type="match status" value="1"/>
</dbReference>
<comment type="function">
    <text evidence="3">Catalyzes the attachment of tyrosine to tRNA(Tyr) in a two-step reaction: tyrosine is first activated by ATP to form Tyr-AMP and then transferred to the acceptor end of tRNA(Tyr).</text>
</comment>
<comment type="catalytic activity">
    <reaction evidence="5">
        <text>tRNA(Tyr) + L-tyrosine + ATP = L-tyrosyl-tRNA(Tyr) + AMP + diphosphate + H(+)</text>
        <dbReference type="Rhea" id="RHEA:10220"/>
        <dbReference type="Rhea" id="RHEA-COMP:9706"/>
        <dbReference type="Rhea" id="RHEA-COMP:9707"/>
        <dbReference type="ChEBI" id="CHEBI:15378"/>
        <dbReference type="ChEBI" id="CHEBI:30616"/>
        <dbReference type="ChEBI" id="CHEBI:33019"/>
        <dbReference type="ChEBI" id="CHEBI:58315"/>
        <dbReference type="ChEBI" id="CHEBI:78442"/>
        <dbReference type="ChEBI" id="CHEBI:78536"/>
        <dbReference type="ChEBI" id="CHEBI:456215"/>
        <dbReference type="EC" id="6.1.1.1"/>
    </reaction>
</comment>
<comment type="subcellular location">
    <subcellularLocation>
        <location evidence="6 7">Cytoplasm</location>
        <location evidence="6 7">Cytosol</location>
    </subcellularLocation>
</comment>
<comment type="disruption phenotype">
    <text evidence="4">No visible phenotype under normal growth conditions.</text>
</comment>
<comment type="similarity">
    <text evidence="5">Belongs to the class-I aminoacyl-tRNA synthetase family.</text>
</comment>
<comment type="sequence caution" evidence="5">
    <conflict type="erroneous gene model prediction">
        <sequence resource="EMBL-CDS" id="AAC69137"/>
    </conflict>
</comment>
<comment type="sequence caution" evidence="5">
    <conflict type="frameshift">
        <sequence resource="EMBL-CDS" id="BAE99987"/>
    </conflict>
</comment>
<protein>
    <recommendedName>
        <fullName evidence="5">Tyrosine--tRNA ligase 1, cytoplasmic</fullName>
        <ecNumber evidence="5">6.1.1.1</ecNumber>
    </recommendedName>
    <alternativeName>
        <fullName evidence="5">Tyrosyl-tRNA synthetase</fullName>
        <shortName evidence="5">TyrRS</shortName>
    </alternativeName>
</protein>
<reference key="1">
    <citation type="journal article" date="1999" name="Nature">
        <title>Sequence and analysis of chromosome 2 of the plant Arabidopsis thaliana.</title>
        <authorList>
            <person name="Lin X."/>
            <person name="Kaul S."/>
            <person name="Rounsley S.D."/>
            <person name="Shea T.P."/>
            <person name="Benito M.-I."/>
            <person name="Town C.D."/>
            <person name="Fujii C.Y."/>
            <person name="Mason T.M."/>
            <person name="Bowman C.L."/>
            <person name="Barnstead M.E."/>
            <person name="Feldblyum T.V."/>
            <person name="Buell C.R."/>
            <person name="Ketchum K.A."/>
            <person name="Lee J.J."/>
            <person name="Ronning C.M."/>
            <person name="Koo H.L."/>
            <person name="Moffat K.S."/>
            <person name="Cronin L.A."/>
            <person name="Shen M."/>
            <person name="Pai G."/>
            <person name="Van Aken S."/>
            <person name="Umayam L."/>
            <person name="Tallon L.J."/>
            <person name="Gill J.E."/>
            <person name="Adams M.D."/>
            <person name="Carrera A.J."/>
            <person name="Creasy T.H."/>
            <person name="Goodman H.M."/>
            <person name="Somerville C.R."/>
            <person name="Copenhaver G.P."/>
            <person name="Preuss D."/>
            <person name="Nierman W.C."/>
            <person name="White O."/>
            <person name="Eisen J.A."/>
            <person name="Salzberg S.L."/>
            <person name="Fraser C.M."/>
            <person name="Venter J.C."/>
        </authorList>
    </citation>
    <scope>NUCLEOTIDE SEQUENCE [LARGE SCALE GENOMIC DNA]</scope>
    <source>
        <strain>cv. Columbia</strain>
    </source>
</reference>
<reference key="2">
    <citation type="journal article" date="2017" name="Plant J.">
        <title>Araport11: a complete reannotation of the Arabidopsis thaliana reference genome.</title>
        <authorList>
            <person name="Cheng C.Y."/>
            <person name="Krishnakumar V."/>
            <person name="Chan A.P."/>
            <person name="Thibaud-Nissen F."/>
            <person name="Schobel S."/>
            <person name="Town C.D."/>
        </authorList>
    </citation>
    <scope>GENOME REANNOTATION</scope>
    <source>
        <strain>cv. Columbia</strain>
    </source>
</reference>
<reference key="3">
    <citation type="journal article" date="2003" name="Science">
        <title>Empirical analysis of transcriptional activity in the Arabidopsis genome.</title>
        <authorList>
            <person name="Yamada K."/>
            <person name="Lim J."/>
            <person name="Dale J.M."/>
            <person name="Chen H."/>
            <person name="Shinn P."/>
            <person name="Palm C.J."/>
            <person name="Southwick A.M."/>
            <person name="Wu H.C."/>
            <person name="Kim C.J."/>
            <person name="Nguyen M."/>
            <person name="Pham P.K."/>
            <person name="Cheuk R.F."/>
            <person name="Karlin-Newmann G."/>
            <person name="Liu S.X."/>
            <person name="Lam B."/>
            <person name="Sakano H."/>
            <person name="Wu T."/>
            <person name="Yu G."/>
            <person name="Miranda M."/>
            <person name="Quach H.L."/>
            <person name="Tripp M."/>
            <person name="Chang C.H."/>
            <person name="Lee J.M."/>
            <person name="Toriumi M.J."/>
            <person name="Chan M.M."/>
            <person name="Tang C.C."/>
            <person name="Onodera C.S."/>
            <person name="Deng J.M."/>
            <person name="Akiyama K."/>
            <person name="Ansari Y."/>
            <person name="Arakawa T."/>
            <person name="Banh J."/>
            <person name="Banno F."/>
            <person name="Bowser L."/>
            <person name="Brooks S.Y."/>
            <person name="Carninci P."/>
            <person name="Chao Q."/>
            <person name="Choy N."/>
            <person name="Enju A."/>
            <person name="Goldsmith A.D."/>
            <person name="Gurjal M."/>
            <person name="Hansen N.F."/>
            <person name="Hayashizaki Y."/>
            <person name="Johnson-Hopson C."/>
            <person name="Hsuan V.W."/>
            <person name="Iida K."/>
            <person name="Karnes M."/>
            <person name="Khan S."/>
            <person name="Koesema E."/>
            <person name="Ishida J."/>
            <person name="Jiang P.X."/>
            <person name="Jones T."/>
            <person name="Kawai J."/>
            <person name="Kamiya A."/>
            <person name="Meyers C."/>
            <person name="Nakajima M."/>
            <person name="Narusaka M."/>
            <person name="Seki M."/>
            <person name="Sakurai T."/>
            <person name="Satou M."/>
            <person name="Tamse R."/>
            <person name="Vaysberg M."/>
            <person name="Wallender E.K."/>
            <person name="Wong C."/>
            <person name="Yamamura Y."/>
            <person name="Yuan S."/>
            <person name="Shinozaki K."/>
            <person name="Davis R.W."/>
            <person name="Theologis A."/>
            <person name="Ecker J.R."/>
        </authorList>
    </citation>
    <scope>NUCLEOTIDE SEQUENCE [LARGE SCALE MRNA]</scope>
    <source>
        <strain>cv. Columbia</strain>
    </source>
</reference>
<reference key="4">
    <citation type="submission" date="2006-07" db="EMBL/GenBank/DDBJ databases">
        <title>Large-scale analysis of RIKEN Arabidopsis full-length (RAFL) cDNAs.</title>
        <authorList>
            <person name="Totoki Y."/>
            <person name="Seki M."/>
            <person name="Ishida J."/>
            <person name="Nakajima M."/>
            <person name="Enju A."/>
            <person name="Kamiya A."/>
            <person name="Narusaka M."/>
            <person name="Shin-i T."/>
            <person name="Nakagawa M."/>
            <person name="Sakamoto N."/>
            <person name="Oishi K."/>
            <person name="Kohara Y."/>
            <person name="Kobayashi M."/>
            <person name="Toyoda A."/>
            <person name="Sakaki Y."/>
            <person name="Sakurai T."/>
            <person name="Iida K."/>
            <person name="Akiyama K."/>
            <person name="Satou M."/>
            <person name="Toyoda T."/>
            <person name="Konagaya A."/>
            <person name="Carninci P."/>
            <person name="Kawai J."/>
            <person name="Hayashizaki Y."/>
            <person name="Shinozaki K."/>
        </authorList>
    </citation>
    <scope>NUCLEOTIDE SEQUENCE [LARGE SCALE MRNA]</scope>
    <source>
        <strain>cv. Columbia</strain>
    </source>
</reference>
<reference key="5">
    <citation type="journal article" date="2005" name="Plant J.">
        <title>Requirement of aminoacyl-tRNA synthetases for gametogenesis and embryo development in Arabidopsis.</title>
        <authorList>
            <person name="Berg M."/>
            <person name="Rogers R."/>
            <person name="Muralla R."/>
            <person name="Meinke D."/>
        </authorList>
    </citation>
    <scope>SUBCELLULAR LOCATION</scope>
    <scope>DISRUPTION PHENOTYPE</scope>
</reference>
<reference key="6">
    <citation type="journal article" date="2005" name="Proc. Natl. Acad. Sci. U.S.A.">
        <title>Dual targeting is the rule for organellar aminoacyl-tRNA synthetases in Arabidopsis thaliana.</title>
        <authorList>
            <person name="Duchene A.-M."/>
            <person name="Giritch A."/>
            <person name="Hoffmann B."/>
            <person name="Cognat V."/>
            <person name="Lancelin D."/>
            <person name="Peeters N.M."/>
            <person name="Zaepfel M."/>
            <person name="Marechal-Drouard L."/>
            <person name="Small I.D."/>
        </authorList>
    </citation>
    <scope>SUBCELLULAR LOCATION</scope>
</reference>
<name>SYYC1_ARATH</name>